<reference key="1">
    <citation type="journal article" date="2008" name="J. Bacteriol.">
        <title>The complete genome sequence of Escherichia coli DH10B: insights into the biology of a laboratory workhorse.</title>
        <authorList>
            <person name="Durfee T."/>
            <person name="Nelson R."/>
            <person name="Baldwin S."/>
            <person name="Plunkett G. III"/>
            <person name="Burland V."/>
            <person name="Mau B."/>
            <person name="Petrosino J.F."/>
            <person name="Qin X."/>
            <person name="Muzny D.M."/>
            <person name="Ayele M."/>
            <person name="Gibbs R.A."/>
            <person name="Csorgo B."/>
            <person name="Posfai G."/>
            <person name="Weinstock G.M."/>
            <person name="Blattner F.R."/>
        </authorList>
    </citation>
    <scope>NUCLEOTIDE SEQUENCE [LARGE SCALE GENOMIC DNA]</scope>
    <source>
        <strain>K12 / DH10B</strain>
    </source>
</reference>
<sequence>MRTQWPSPAKLNLFLYITGQRADGYHTLQTLFQFLDYGDTISIELRDDGDIRLLTPVEGVEHEDNLIVRAARLLMKTAADSGRLPTGSGANISIDKRLPMGGGLGGGSSNAATVLVALNHLWQCGLSMDELAEMGLTLGADVPVFVRGHAAFAEGVGEILTPVDPPEKWYLVAHPGVSIPTPVIFKDPELPRNTPKRSIETLLKCEFSNDCEVIARKRFREVDAVLSWLLEYAPSRLTGTGACVFAEFDTESEARQVLEQAPEWLNGFVAKGANLSPLHRAML</sequence>
<evidence type="ECO:0000255" key="1">
    <source>
        <dbReference type="HAMAP-Rule" id="MF_00061"/>
    </source>
</evidence>
<accession>B1XAP9</accession>
<name>ISPE_ECODH</name>
<dbReference type="EC" id="2.7.1.148" evidence="1"/>
<dbReference type="EMBL" id="CP000948">
    <property type="protein sequence ID" value="ACB02378.1"/>
    <property type="molecule type" value="Genomic_DNA"/>
</dbReference>
<dbReference type="RefSeq" id="WP_001260332.1">
    <property type="nucleotide sequence ID" value="NC_010473.1"/>
</dbReference>
<dbReference type="SMR" id="B1XAP9"/>
<dbReference type="KEGG" id="ecd:ECDH10B_1261"/>
<dbReference type="HOGENOM" id="CLU_053057_3_0_6"/>
<dbReference type="UniPathway" id="UPA00056">
    <property type="reaction ID" value="UER00094"/>
</dbReference>
<dbReference type="GO" id="GO:0050515">
    <property type="term" value="F:4-(cytidine 5'-diphospho)-2-C-methyl-D-erythritol kinase activity"/>
    <property type="evidence" value="ECO:0007669"/>
    <property type="project" value="UniProtKB-UniRule"/>
</dbReference>
<dbReference type="GO" id="GO:0005524">
    <property type="term" value="F:ATP binding"/>
    <property type="evidence" value="ECO:0007669"/>
    <property type="project" value="UniProtKB-UniRule"/>
</dbReference>
<dbReference type="GO" id="GO:0019288">
    <property type="term" value="P:isopentenyl diphosphate biosynthetic process, methylerythritol 4-phosphate pathway"/>
    <property type="evidence" value="ECO:0007669"/>
    <property type="project" value="UniProtKB-UniRule"/>
</dbReference>
<dbReference type="GO" id="GO:0016114">
    <property type="term" value="P:terpenoid biosynthetic process"/>
    <property type="evidence" value="ECO:0007669"/>
    <property type="project" value="InterPro"/>
</dbReference>
<dbReference type="FunFam" id="3.30.230.10:FF:000022">
    <property type="entry name" value="4-diphosphocytidyl-2-C-methyl-D-erythritol kinase"/>
    <property type="match status" value="1"/>
</dbReference>
<dbReference type="FunFam" id="3.30.70.890:FF:000004">
    <property type="entry name" value="4-diphosphocytidyl-2-C-methyl-D-erythritol kinase"/>
    <property type="match status" value="1"/>
</dbReference>
<dbReference type="Gene3D" id="3.30.230.10">
    <property type="match status" value="1"/>
</dbReference>
<dbReference type="Gene3D" id="3.30.70.890">
    <property type="entry name" value="GHMP kinase, C-terminal domain"/>
    <property type="match status" value="1"/>
</dbReference>
<dbReference type="HAMAP" id="MF_00061">
    <property type="entry name" value="IspE"/>
    <property type="match status" value="1"/>
</dbReference>
<dbReference type="InterPro" id="IPR013750">
    <property type="entry name" value="GHMP_kinase_C_dom"/>
</dbReference>
<dbReference type="InterPro" id="IPR036554">
    <property type="entry name" value="GHMP_kinase_C_sf"/>
</dbReference>
<dbReference type="InterPro" id="IPR006204">
    <property type="entry name" value="GHMP_kinase_N_dom"/>
</dbReference>
<dbReference type="InterPro" id="IPR004424">
    <property type="entry name" value="IspE"/>
</dbReference>
<dbReference type="InterPro" id="IPR020568">
    <property type="entry name" value="Ribosomal_Su5_D2-typ_SF"/>
</dbReference>
<dbReference type="InterPro" id="IPR014721">
    <property type="entry name" value="Ribsml_uS5_D2-typ_fold_subgr"/>
</dbReference>
<dbReference type="NCBIfam" id="TIGR00154">
    <property type="entry name" value="ispE"/>
    <property type="match status" value="1"/>
</dbReference>
<dbReference type="PANTHER" id="PTHR43527">
    <property type="entry name" value="4-DIPHOSPHOCYTIDYL-2-C-METHYL-D-ERYTHRITOL KINASE, CHLOROPLASTIC"/>
    <property type="match status" value="1"/>
</dbReference>
<dbReference type="PANTHER" id="PTHR43527:SF2">
    <property type="entry name" value="4-DIPHOSPHOCYTIDYL-2-C-METHYL-D-ERYTHRITOL KINASE, CHLOROPLASTIC"/>
    <property type="match status" value="1"/>
</dbReference>
<dbReference type="Pfam" id="PF08544">
    <property type="entry name" value="GHMP_kinases_C"/>
    <property type="match status" value="1"/>
</dbReference>
<dbReference type="Pfam" id="PF00288">
    <property type="entry name" value="GHMP_kinases_N"/>
    <property type="match status" value="1"/>
</dbReference>
<dbReference type="PIRSF" id="PIRSF010376">
    <property type="entry name" value="IspE"/>
    <property type="match status" value="1"/>
</dbReference>
<dbReference type="SUPFAM" id="SSF55060">
    <property type="entry name" value="GHMP Kinase, C-terminal domain"/>
    <property type="match status" value="1"/>
</dbReference>
<dbReference type="SUPFAM" id="SSF54211">
    <property type="entry name" value="Ribosomal protein S5 domain 2-like"/>
    <property type="match status" value="1"/>
</dbReference>
<feature type="chain" id="PRO_1000092084" description="4-diphosphocytidyl-2-C-methyl-D-erythritol kinase">
    <location>
        <begin position="1"/>
        <end position="283"/>
    </location>
</feature>
<feature type="active site" evidence="1">
    <location>
        <position position="10"/>
    </location>
</feature>
<feature type="active site" evidence="1">
    <location>
        <position position="141"/>
    </location>
</feature>
<feature type="binding site" evidence="1">
    <location>
        <begin position="99"/>
        <end position="109"/>
    </location>
    <ligand>
        <name>ATP</name>
        <dbReference type="ChEBI" id="CHEBI:30616"/>
    </ligand>
</feature>
<comment type="function">
    <text evidence="1">Catalyzes the phosphorylation of the position 2 hydroxy group of 4-diphosphocytidyl-2C-methyl-D-erythritol.</text>
</comment>
<comment type="catalytic activity">
    <reaction evidence="1">
        <text>4-CDP-2-C-methyl-D-erythritol + ATP = 4-CDP-2-C-methyl-D-erythritol 2-phosphate + ADP + H(+)</text>
        <dbReference type="Rhea" id="RHEA:18437"/>
        <dbReference type="ChEBI" id="CHEBI:15378"/>
        <dbReference type="ChEBI" id="CHEBI:30616"/>
        <dbReference type="ChEBI" id="CHEBI:57823"/>
        <dbReference type="ChEBI" id="CHEBI:57919"/>
        <dbReference type="ChEBI" id="CHEBI:456216"/>
        <dbReference type="EC" id="2.7.1.148"/>
    </reaction>
</comment>
<comment type="pathway">
    <text evidence="1">Isoprenoid biosynthesis; isopentenyl diphosphate biosynthesis via DXP pathway; isopentenyl diphosphate from 1-deoxy-D-xylulose 5-phosphate: step 3/6.</text>
</comment>
<comment type="subunit">
    <text evidence="1">Homodimer.</text>
</comment>
<comment type="similarity">
    <text evidence="1">Belongs to the GHMP kinase family. IspE subfamily.</text>
</comment>
<protein>
    <recommendedName>
        <fullName evidence="1">4-diphosphocytidyl-2-C-methyl-D-erythritol kinase</fullName>
        <shortName evidence="1">CMK</shortName>
        <ecNumber evidence="1">2.7.1.148</ecNumber>
    </recommendedName>
    <alternativeName>
        <fullName evidence="1">4-(cytidine-5'-diphospho)-2-C-methyl-D-erythritol kinase</fullName>
    </alternativeName>
</protein>
<organism>
    <name type="scientific">Escherichia coli (strain K12 / DH10B)</name>
    <dbReference type="NCBI Taxonomy" id="316385"/>
    <lineage>
        <taxon>Bacteria</taxon>
        <taxon>Pseudomonadati</taxon>
        <taxon>Pseudomonadota</taxon>
        <taxon>Gammaproteobacteria</taxon>
        <taxon>Enterobacterales</taxon>
        <taxon>Enterobacteriaceae</taxon>
        <taxon>Escherichia</taxon>
    </lineage>
</organism>
<proteinExistence type="inferred from homology"/>
<keyword id="KW-0067">ATP-binding</keyword>
<keyword id="KW-0414">Isoprene biosynthesis</keyword>
<keyword id="KW-0418">Kinase</keyword>
<keyword id="KW-0547">Nucleotide-binding</keyword>
<keyword id="KW-0808">Transferase</keyword>
<gene>
    <name evidence="1" type="primary">ispE</name>
    <name type="ordered locus">ECDH10B_1261</name>
</gene>